<gene>
    <name evidence="1" type="primary">atpF</name>
    <name type="ordered locus">cbdbA534</name>
</gene>
<protein>
    <recommendedName>
        <fullName evidence="1">ATP synthase subunit b</fullName>
    </recommendedName>
    <alternativeName>
        <fullName evidence="1">ATP synthase F(0) sector subunit b</fullName>
    </alternativeName>
    <alternativeName>
        <fullName evidence="1">ATPase subunit I</fullName>
    </alternativeName>
    <alternativeName>
        <fullName evidence="1">F-type ATPase subunit b</fullName>
        <shortName evidence="1">F-ATPase subunit b</shortName>
    </alternativeName>
</protein>
<feature type="chain" id="PRO_0000368454" description="ATP synthase subunit b">
    <location>
        <begin position="1"/>
        <end position="169"/>
    </location>
</feature>
<feature type="transmembrane region" description="Helical" evidence="1">
    <location>
        <begin position="11"/>
        <end position="31"/>
    </location>
</feature>
<accession>Q3ZZU1</accession>
<name>ATPF_DEHMC</name>
<evidence type="ECO:0000255" key="1">
    <source>
        <dbReference type="HAMAP-Rule" id="MF_01398"/>
    </source>
</evidence>
<reference key="1">
    <citation type="journal article" date="2005" name="Nat. Biotechnol.">
        <title>Genome sequence of the chlorinated compound-respiring bacterium Dehalococcoides species strain CBDB1.</title>
        <authorList>
            <person name="Kube M."/>
            <person name="Beck A."/>
            <person name="Zinder S.H."/>
            <person name="Kuhl H."/>
            <person name="Reinhardt R."/>
            <person name="Adrian L."/>
        </authorList>
    </citation>
    <scope>NUCLEOTIDE SEQUENCE [LARGE SCALE GENOMIC DNA]</scope>
    <source>
        <strain>CBDB1</strain>
    </source>
</reference>
<organism>
    <name type="scientific">Dehalococcoides mccartyi (strain CBDB1)</name>
    <dbReference type="NCBI Taxonomy" id="255470"/>
    <lineage>
        <taxon>Bacteria</taxon>
        <taxon>Bacillati</taxon>
        <taxon>Chloroflexota</taxon>
        <taxon>Dehalococcoidia</taxon>
        <taxon>Dehalococcoidales</taxon>
        <taxon>Dehalococcoidaceae</taxon>
        <taxon>Dehalococcoides</taxon>
    </lineage>
</organism>
<sequence>MEKLAELGINIPSFIAQIVNFGLLLGLLYLFAYKPILAKLDERSTRIKESMERTDQVKEQAQKAEEEFKKKIGEASQQGQLVIERAVKTGDEIRQKAIEEAKAEAEAMLSRARTEIRQERDEVVDQLRKEFAELTILAAGKVIDQSLDKKAHQALIDSVLENSTDLRKN</sequence>
<proteinExistence type="inferred from homology"/>
<dbReference type="EMBL" id="AJ965256">
    <property type="protein sequence ID" value="CAI82722.1"/>
    <property type="molecule type" value="Genomic_DNA"/>
</dbReference>
<dbReference type="RefSeq" id="WP_011309074.1">
    <property type="nucleotide sequence ID" value="NC_007356.1"/>
</dbReference>
<dbReference type="SMR" id="Q3ZZU1"/>
<dbReference type="KEGG" id="deh:cbdbA534"/>
<dbReference type="HOGENOM" id="CLU_079215_4_4_0"/>
<dbReference type="Proteomes" id="UP000000433">
    <property type="component" value="Chromosome"/>
</dbReference>
<dbReference type="GO" id="GO:0005886">
    <property type="term" value="C:plasma membrane"/>
    <property type="evidence" value="ECO:0007669"/>
    <property type="project" value="UniProtKB-SubCell"/>
</dbReference>
<dbReference type="GO" id="GO:0045259">
    <property type="term" value="C:proton-transporting ATP synthase complex"/>
    <property type="evidence" value="ECO:0007669"/>
    <property type="project" value="UniProtKB-KW"/>
</dbReference>
<dbReference type="GO" id="GO:0046933">
    <property type="term" value="F:proton-transporting ATP synthase activity, rotational mechanism"/>
    <property type="evidence" value="ECO:0007669"/>
    <property type="project" value="UniProtKB-UniRule"/>
</dbReference>
<dbReference type="GO" id="GO:0046961">
    <property type="term" value="F:proton-transporting ATPase activity, rotational mechanism"/>
    <property type="evidence" value="ECO:0007669"/>
    <property type="project" value="TreeGrafter"/>
</dbReference>
<dbReference type="CDD" id="cd06503">
    <property type="entry name" value="ATP-synt_Fo_b"/>
    <property type="match status" value="1"/>
</dbReference>
<dbReference type="Gene3D" id="1.20.5.620">
    <property type="entry name" value="F1F0 ATP synthase subunit B, membrane domain"/>
    <property type="match status" value="1"/>
</dbReference>
<dbReference type="HAMAP" id="MF_01398">
    <property type="entry name" value="ATP_synth_b_bprime"/>
    <property type="match status" value="1"/>
</dbReference>
<dbReference type="InterPro" id="IPR028987">
    <property type="entry name" value="ATP_synth_B-like_membr_sf"/>
</dbReference>
<dbReference type="InterPro" id="IPR002146">
    <property type="entry name" value="ATP_synth_b/b'su_bac/chlpt"/>
</dbReference>
<dbReference type="InterPro" id="IPR005864">
    <property type="entry name" value="ATP_synth_F0_bsu_bac"/>
</dbReference>
<dbReference type="InterPro" id="IPR050059">
    <property type="entry name" value="ATP_synthase_B_chain"/>
</dbReference>
<dbReference type="NCBIfam" id="TIGR01144">
    <property type="entry name" value="ATP_synt_b"/>
    <property type="match status" value="1"/>
</dbReference>
<dbReference type="PANTHER" id="PTHR33445:SF1">
    <property type="entry name" value="ATP SYNTHASE SUBUNIT B"/>
    <property type="match status" value="1"/>
</dbReference>
<dbReference type="PANTHER" id="PTHR33445">
    <property type="entry name" value="ATP SYNTHASE SUBUNIT B', CHLOROPLASTIC"/>
    <property type="match status" value="1"/>
</dbReference>
<dbReference type="Pfam" id="PF00430">
    <property type="entry name" value="ATP-synt_B"/>
    <property type="match status" value="1"/>
</dbReference>
<dbReference type="SUPFAM" id="SSF81573">
    <property type="entry name" value="F1F0 ATP synthase subunit B, membrane domain"/>
    <property type="match status" value="1"/>
</dbReference>
<keyword id="KW-0066">ATP synthesis</keyword>
<keyword id="KW-1003">Cell membrane</keyword>
<keyword id="KW-0138">CF(0)</keyword>
<keyword id="KW-0375">Hydrogen ion transport</keyword>
<keyword id="KW-0406">Ion transport</keyword>
<keyword id="KW-0472">Membrane</keyword>
<keyword id="KW-0812">Transmembrane</keyword>
<keyword id="KW-1133">Transmembrane helix</keyword>
<keyword id="KW-0813">Transport</keyword>
<comment type="function">
    <text evidence="1">F(1)F(0) ATP synthase produces ATP from ADP in the presence of a proton or sodium gradient. F-type ATPases consist of two structural domains, F(1) containing the extramembraneous catalytic core and F(0) containing the membrane proton channel, linked together by a central stalk and a peripheral stalk. During catalysis, ATP synthesis in the catalytic domain of F(1) is coupled via a rotary mechanism of the central stalk subunits to proton translocation.</text>
</comment>
<comment type="function">
    <text evidence="1">Component of the F(0) channel, it forms part of the peripheral stalk, linking F(1) to F(0).</text>
</comment>
<comment type="subunit">
    <text evidence="1">F-type ATPases have 2 components, F(1) - the catalytic core - and F(0) - the membrane proton channel. F(1) has five subunits: alpha(3), beta(3), gamma(1), delta(1), epsilon(1). F(0) has three main subunits: a(1), b(2) and c(10-14). The alpha and beta chains form an alternating ring which encloses part of the gamma chain. F(1) is attached to F(0) by a central stalk formed by the gamma and epsilon chains, while a peripheral stalk is formed by the delta and b chains.</text>
</comment>
<comment type="subcellular location">
    <subcellularLocation>
        <location evidence="1">Cell membrane</location>
        <topology evidence="1">Single-pass membrane protein</topology>
    </subcellularLocation>
</comment>
<comment type="similarity">
    <text evidence="1">Belongs to the ATPase B chain family.</text>
</comment>